<comment type="function">
    <text evidence="1">Binds as a heterodimer with protein bS6 to the central domain of the 16S rRNA, where it helps stabilize the platform of the 30S subunit.</text>
</comment>
<comment type="subunit">
    <text evidence="1">Part of the 30S ribosomal subunit. Forms a tight heterodimer with protein bS6.</text>
</comment>
<comment type="similarity">
    <text evidence="1">Belongs to the bacterial ribosomal protein bS18 family.</text>
</comment>
<gene>
    <name evidence="1" type="primary">rpsR</name>
    <name type="ordered locus">Mchl_4309</name>
</gene>
<organism>
    <name type="scientific">Methylorubrum extorquens (strain CM4 / NCIMB 13688)</name>
    <name type="common">Methylobacterium extorquens</name>
    <dbReference type="NCBI Taxonomy" id="440085"/>
    <lineage>
        <taxon>Bacteria</taxon>
        <taxon>Pseudomonadati</taxon>
        <taxon>Pseudomonadota</taxon>
        <taxon>Alphaproteobacteria</taxon>
        <taxon>Hyphomicrobiales</taxon>
        <taxon>Methylobacteriaceae</taxon>
        <taxon>Methylorubrum</taxon>
    </lineage>
</organism>
<feature type="chain" id="PRO_1000196520" description="Small ribosomal subunit protein bS18">
    <location>
        <begin position="1"/>
        <end position="84"/>
    </location>
</feature>
<accession>B7L2P1</accession>
<evidence type="ECO:0000255" key="1">
    <source>
        <dbReference type="HAMAP-Rule" id="MF_00270"/>
    </source>
</evidence>
<evidence type="ECO:0000305" key="2"/>
<name>RS18_METC4</name>
<keyword id="KW-0687">Ribonucleoprotein</keyword>
<keyword id="KW-0689">Ribosomal protein</keyword>
<keyword id="KW-0694">RNA-binding</keyword>
<keyword id="KW-0699">rRNA-binding</keyword>
<dbReference type="EMBL" id="CP001298">
    <property type="protein sequence ID" value="ACK85085.1"/>
    <property type="molecule type" value="Genomic_DNA"/>
</dbReference>
<dbReference type="RefSeq" id="WP_004446294.1">
    <property type="nucleotide sequence ID" value="NC_011757.1"/>
</dbReference>
<dbReference type="SMR" id="B7L2P1"/>
<dbReference type="GeneID" id="72991657"/>
<dbReference type="KEGG" id="mch:Mchl_4309"/>
<dbReference type="HOGENOM" id="CLU_148710_2_2_5"/>
<dbReference type="Proteomes" id="UP000002385">
    <property type="component" value="Chromosome"/>
</dbReference>
<dbReference type="GO" id="GO:0022627">
    <property type="term" value="C:cytosolic small ribosomal subunit"/>
    <property type="evidence" value="ECO:0007669"/>
    <property type="project" value="TreeGrafter"/>
</dbReference>
<dbReference type="GO" id="GO:0070181">
    <property type="term" value="F:small ribosomal subunit rRNA binding"/>
    <property type="evidence" value="ECO:0007669"/>
    <property type="project" value="TreeGrafter"/>
</dbReference>
<dbReference type="GO" id="GO:0003735">
    <property type="term" value="F:structural constituent of ribosome"/>
    <property type="evidence" value="ECO:0007669"/>
    <property type="project" value="InterPro"/>
</dbReference>
<dbReference type="GO" id="GO:0006412">
    <property type="term" value="P:translation"/>
    <property type="evidence" value="ECO:0007669"/>
    <property type="project" value="UniProtKB-UniRule"/>
</dbReference>
<dbReference type="FunFam" id="4.10.640.10:FF:000006">
    <property type="entry name" value="30S ribosomal protein S18"/>
    <property type="match status" value="1"/>
</dbReference>
<dbReference type="Gene3D" id="4.10.640.10">
    <property type="entry name" value="Ribosomal protein S18"/>
    <property type="match status" value="1"/>
</dbReference>
<dbReference type="HAMAP" id="MF_00270">
    <property type="entry name" value="Ribosomal_bS18"/>
    <property type="match status" value="1"/>
</dbReference>
<dbReference type="InterPro" id="IPR001648">
    <property type="entry name" value="Ribosomal_bS18"/>
</dbReference>
<dbReference type="InterPro" id="IPR018275">
    <property type="entry name" value="Ribosomal_bS18_CS"/>
</dbReference>
<dbReference type="InterPro" id="IPR036870">
    <property type="entry name" value="Ribosomal_bS18_sf"/>
</dbReference>
<dbReference type="NCBIfam" id="TIGR00165">
    <property type="entry name" value="S18"/>
    <property type="match status" value="1"/>
</dbReference>
<dbReference type="PANTHER" id="PTHR13479">
    <property type="entry name" value="30S RIBOSOMAL PROTEIN S18"/>
    <property type="match status" value="1"/>
</dbReference>
<dbReference type="PANTHER" id="PTHR13479:SF40">
    <property type="entry name" value="SMALL RIBOSOMAL SUBUNIT PROTEIN BS18M"/>
    <property type="match status" value="1"/>
</dbReference>
<dbReference type="Pfam" id="PF01084">
    <property type="entry name" value="Ribosomal_S18"/>
    <property type="match status" value="1"/>
</dbReference>
<dbReference type="PRINTS" id="PR00974">
    <property type="entry name" value="RIBOSOMALS18"/>
</dbReference>
<dbReference type="SUPFAM" id="SSF46911">
    <property type="entry name" value="Ribosomal protein S18"/>
    <property type="match status" value="1"/>
</dbReference>
<dbReference type="PROSITE" id="PS00057">
    <property type="entry name" value="RIBOSOMAL_S18"/>
    <property type="match status" value="1"/>
</dbReference>
<reference key="1">
    <citation type="submission" date="2008-12" db="EMBL/GenBank/DDBJ databases">
        <title>Complete sequence of chromosome of Methylobacterium chloromethanicum CM4.</title>
        <authorList>
            <consortium name="US DOE Joint Genome Institute"/>
            <person name="Lucas S."/>
            <person name="Copeland A."/>
            <person name="Lapidus A."/>
            <person name="Glavina del Rio T."/>
            <person name="Dalin E."/>
            <person name="Tice H."/>
            <person name="Bruce D."/>
            <person name="Goodwin L."/>
            <person name="Pitluck S."/>
            <person name="Chertkov O."/>
            <person name="Brettin T."/>
            <person name="Detter J.C."/>
            <person name="Han C."/>
            <person name="Larimer F."/>
            <person name="Land M."/>
            <person name="Hauser L."/>
            <person name="Kyrpides N."/>
            <person name="Mikhailova N."/>
            <person name="Marx C."/>
            <person name="Richardson P."/>
        </authorList>
    </citation>
    <scope>NUCLEOTIDE SEQUENCE [LARGE SCALE GENOMIC DNA]</scope>
    <source>
        <strain>CM4 / NCIMB 13688</strain>
    </source>
</reference>
<proteinExistence type="inferred from homology"/>
<sequence>MAFGAGGGGGGRRPFFRRRKSCPFSGENAPKIDYKDVKLLSRYVSERGKIVPSRITAVSAKKQRELAQAIKRSRFLGLLPYVIK</sequence>
<protein>
    <recommendedName>
        <fullName evidence="1">Small ribosomal subunit protein bS18</fullName>
    </recommendedName>
    <alternativeName>
        <fullName evidence="2">30S ribosomal protein S18</fullName>
    </alternativeName>
</protein>